<comment type="catalytic activity">
    <reaction evidence="1">
        <text>tRNA(His) + L-histidine + ATP = L-histidyl-tRNA(His) + AMP + diphosphate + H(+)</text>
        <dbReference type="Rhea" id="RHEA:17313"/>
        <dbReference type="Rhea" id="RHEA-COMP:9665"/>
        <dbReference type="Rhea" id="RHEA-COMP:9689"/>
        <dbReference type="ChEBI" id="CHEBI:15378"/>
        <dbReference type="ChEBI" id="CHEBI:30616"/>
        <dbReference type="ChEBI" id="CHEBI:33019"/>
        <dbReference type="ChEBI" id="CHEBI:57595"/>
        <dbReference type="ChEBI" id="CHEBI:78442"/>
        <dbReference type="ChEBI" id="CHEBI:78527"/>
        <dbReference type="ChEBI" id="CHEBI:456215"/>
        <dbReference type="EC" id="6.1.1.21"/>
    </reaction>
</comment>
<comment type="subunit">
    <text evidence="1">Homodimer.</text>
</comment>
<comment type="subcellular location">
    <subcellularLocation>
        <location evidence="1">Cytoplasm</location>
    </subcellularLocation>
</comment>
<comment type="similarity">
    <text evidence="1">Belongs to the class-II aminoacyl-tRNA synthetase family.</text>
</comment>
<evidence type="ECO:0000255" key="1">
    <source>
        <dbReference type="HAMAP-Rule" id="MF_00127"/>
    </source>
</evidence>
<accession>A5GQA2</accession>
<proteinExistence type="inferred from homology"/>
<name>SYH_SYNR3</name>
<keyword id="KW-0030">Aminoacyl-tRNA synthetase</keyword>
<keyword id="KW-0067">ATP-binding</keyword>
<keyword id="KW-0963">Cytoplasm</keyword>
<keyword id="KW-0436">Ligase</keyword>
<keyword id="KW-0547">Nucleotide-binding</keyword>
<keyword id="KW-0648">Protein biosynthesis</keyword>
<keyword id="KW-1185">Reference proteome</keyword>
<feature type="chain" id="PRO_1000016473" description="Histidine--tRNA ligase">
    <location>
        <begin position="1"/>
        <end position="414"/>
    </location>
</feature>
<dbReference type="EC" id="6.1.1.21" evidence="1"/>
<dbReference type="EMBL" id="CT978603">
    <property type="protein sequence ID" value="CAK27061.1"/>
    <property type="molecule type" value="Genomic_DNA"/>
</dbReference>
<dbReference type="SMR" id="A5GQA2"/>
<dbReference type="STRING" id="316278.SynRCC307_0158"/>
<dbReference type="KEGG" id="syr:SynRCC307_0158"/>
<dbReference type="eggNOG" id="COG0124">
    <property type="taxonomic scope" value="Bacteria"/>
</dbReference>
<dbReference type="HOGENOM" id="CLU_025113_1_1_3"/>
<dbReference type="OrthoDB" id="9800814at2"/>
<dbReference type="Proteomes" id="UP000001115">
    <property type="component" value="Chromosome"/>
</dbReference>
<dbReference type="GO" id="GO:0005737">
    <property type="term" value="C:cytoplasm"/>
    <property type="evidence" value="ECO:0007669"/>
    <property type="project" value="UniProtKB-SubCell"/>
</dbReference>
<dbReference type="GO" id="GO:0005524">
    <property type="term" value="F:ATP binding"/>
    <property type="evidence" value="ECO:0007669"/>
    <property type="project" value="UniProtKB-UniRule"/>
</dbReference>
<dbReference type="GO" id="GO:0004821">
    <property type="term" value="F:histidine-tRNA ligase activity"/>
    <property type="evidence" value="ECO:0007669"/>
    <property type="project" value="UniProtKB-UniRule"/>
</dbReference>
<dbReference type="GO" id="GO:0006427">
    <property type="term" value="P:histidyl-tRNA aminoacylation"/>
    <property type="evidence" value="ECO:0007669"/>
    <property type="project" value="UniProtKB-UniRule"/>
</dbReference>
<dbReference type="CDD" id="cd00773">
    <property type="entry name" value="HisRS-like_core"/>
    <property type="match status" value="1"/>
</dbReference>
<dbReference type="CDD" id="cd00859">
    <property type="entry name" value="HisRS_anticodon"/>
    <property type="match status" value="1"/>
</dbReference>
<dbReference type="FunFam" id="3.30.930.10:FF:000005">
    <property type="entry name" value="Histidine--tRNA ligase"/>
    <property type="match status" value="1"/>
</dbReference>
<dbReference type="Gene3D" id="3.40.50.800">
    <property type="entry name" value="Anticodon-binding domain"/>
    <property type="match status" value="1"/>
</dbReference>
<dbReference type="Gene3D" id="3.30.930.10">
    <property type="entry name" value="Bira Bifunctional Protein, Domain 2"/>
    <property type="match status" value="1"/>
</dbReference>
<dbReference type="HAMAP" id="MF_00127">
    <property type="entry name" value="His_tRNA_synth"/>
    <property type="match status" value="1"/>
</dbReference>
<dbReference type="InterPro" id="IPR006195">
    <property type="entry name" value="aa-tRNA-synth_II"/>
</dbReference>
<dbReference type="InterPro" id="IPR045864">
    <property type="entry name" value="aa-tRNA-synth_II/BPL/LPL"/>
</dbReference>
<dbReference type="InterPro" id="IPR004154">
    <property type="entry name" value="Anticodon-bd"/>
</dbReference>
<dbReference type="InterPro" id="IPR036621">
    <property type="entry name" value="Anticodon-bd_dom_sf"/>
</dbReference>
<dbReference type="InterPro" id="IPR015807">
    <property type="entry name" value="His-tRNA-ligase"/>
</dbReference>
<dbReference type="InterPro" id="IPR041715">
    <property type="entry name" value="HisRS-like_core"/>
</dbReference>
<dbReference type="InterPro" id="IPR004516">
    <property type="entry name" value="HisRS/HisZ"/>
</dbReference>
<dbReference type="InterPro" id="IPR033656">
    <property type="entry name" value="HisRS_anticodon"/>
</dbReference>
<dbReference type="NCBIfam" id="TIGR00442">
    <property type="entry name" value="hisS"/>
    <property type="match status" value="1"/>
</dbReference>
<dbReference type="PANTHER" id="PTHR43707:SF1">
    <property type="entry name" value="HISTIDINE--TRNA LIGASE, MITOCHONDRIAL-RELATED"/>
    <property type="match status" value="1"/>
</dbReference>
<dbReference type="PANTHER" id="PTHR43707">
    <property type="entry name" value="HISTIDYL-TRNA SYNTHETASE"/>
    <property type="match status" value="1"/>
</dbReference>
<dbReference type="Pfam" id="PF03129">
    <property type="entry name" value="HGTP_anticodon"/>
    <property type="match status" value="1"/>
</dbReference>
<dbReference type="Pfam" id="PF13393">
    <property type="entry name" value="tRNA-synt_His"/>
    <property type="match status" value="1"/>
</dbReference>
<dbReference type="PIRSF" id="PIRSF001549">
    <property type="entry name" value="His-tRNA_synth"/>
    <property type="match status" value="1"/>
</dbReference>
<dbReference type="SUPFAM" id="SSF52954">
    <property type="entry name" value="Class II aaRS ABD-related"/>
    <property type="match status" value="1"/>
</dbReference>
<dbReference type="SUPFAM" id="SSF55681">
    <property type="entry name" value="Class II aaRS and biotin synthetases"/>
    <property type="match status" value="1"/>
</dbReference>
<dbReference type="PROSITE" id="PS50862">
    <property type="entry name" value="AA_TRNA_LIGASE_II"/>
    <property type="match status" value="1"/>
</dbReference>
<gene>
    <name evidence="1" type="primary">hisS</name>
    <name type="ordered locus">SynRCC307_0158</name>
</gene>
<protein>
    <recommendedName>
        <fullName evidence="1">Histidine--tRNA ligase</fullName>
        <ecNumber evidence="1">6.1.1.21</ecNumber>
    </recommendedName>
    <alternativeName>
        <fullName evidence="1">Histidyl-tRNA synthetase</fullName>
        <shortName evidence="1">HisRS</shortName>
    </alternativeName>
</protein>
<organism>
    <name type="scientific">Synechococcus sp. (strain RCC307)</name>
    <dbReference type="NCBI Taxonomy" id="316278"/>
    <lineage>
        <taxon>Bacteria</taxon>
        <taxon>Bacillati</taxon>
        <taxon>Cyanobacteriota</taxon>
        <taxon>Cyanophyceae</taxon>
        <taxon>Synechococcales</taxon>
        <taxon>Synechococcaceae</taxon>
        <taxon>Synechococcus</taxon>
    </lineage>
</organism>
<reference key="1">
    <citation type="submission" date="2006-05" db="EMBL/GenBank/DDBJ databases">
        <authorList>
            <consortium name="Genoscope"/>
        </authorList>
    </citation>
    <scope>NUCLEOTIDE SEQUENCE [LARGE SCALE GENOMIC DNA]</scope>
    <source>
        <strain>RCC307</strain>
    </source>
</reference>
<sequence>MEQLQSLRGMVDLLPAATSRWQWLEQTAREHFRRSCIREIRTPLLEATELFARGIGEATDVVGKEMYSFNDRGDRSCTLRPEGTASVVRAAIQHGLLSQGAQRLWYGGPMFRYERPQGGRQRQFHQIGIEFLGFADPRSDVEAIAIAWDLLEALGITGLQLELNSLGSRVDRQTYRDALVGWLSERQNQLDADSQQRLATNPLRILDSKNPQTQQLLQDAPNLEQSLSDPSRERYEQVKAGLSALKIPYLCNPRLVRGLDYYGHTAFEITSDALGAQATVCGGGRYDGLVEQLGGPAAACVGWAMGLERLMLLLGDESQQSQPPDVVVISQGNAAEALAVPVARQLRQIGQAVDVDLSGAGFGKQLKRAGKSGARWAVLIGDEEASSGQLQRKDLHSGDSSTIALQSLAENWIS</sequence>